<reference key="1">
    <citation type="journal article" date="2004" name="Nat. Genet.">
        <title>Complete sequencing and characterization of 21,243 full-length human cDNAs.</title>
        <authorList>
            <person name="Ota T."/>
            <person name="Suzuki Y."/>
            <person name="Nishikawa T."/>
            <person name="Otsuki T."/>
            <person name="Sugiyama T."/>
            <person name="Irie R."/>
            <person name="Wakamatsu A."/>
            <person name="Hayashi K."/>
            <person name="Sato H."/>
            <person name="Nagai K."/>
            <person name="Kimura K."/>
            <person name="Makita H."/>
            <person name="Sekine M."/>
            <person name="Obayashi M."/>
            <person name="Nishi T."/>
            <person name="Shibahara T."/>
            <person name="Tanaka T."/>
            <person name="Ishii S."/>
            <person name="Yamamoto J."/>
            <person name="Saito K."/>
            <person name="Kawai Y."/>
            <person name="Isono Y."/>
            <person name="Nakamura Y."/>
            <person name="Nagahari K."/>
            <person name="Murakami K."/>
            <person name="Yasuda T."/>
            <person name="Iwayanagi T."/>
            <person name="Wagatsuma M."/>
            <person name="Shiratori A."/>
            <person name="Sudo H."/>
            <person name="Hosoiri T."/>
            <person name="Kaku Y."/>
            <person name="Kodaira H."/>
            <person name="Kondo H."/>
            <person name="Sugawara M."/>
            <person name="Takahashi M."/>
            <person name="Kanda K."/>
            <person name="Yokoi T."/>
            <person name="Furuya T."/>
            <person name="Kikkawa E."/>
            <person name="Omura Y."/>
            <person name="Abe K."/>
            <person name="Kamihara K."/>
            <person name="Katsuta N."/>
            <person name="Sato K."/>
            <person name="Tanikawa M."/>
            <person name="Yamazaki M."/>
            <person name="Ninomiya K."/>
            <person name="Ishibashi T."/>
            <person name="Yamashita H."/>
            <person name="Murakawa K."/>
            <person name="Fujimori K."/>
            <person name="Tanai H."/>
            <person name="Kimata M."/>
            <person name="Watanabe M."/>
            <person name="Hiraoka S."/>
            <person name="Chiba Y."/>
            <person name="Ishida S."/>
            <person name="Ono Y."/>
            <person name="Takiguchi S."/>
            <person name="Watanabe S."/>
            <person name="Yosida M."/>
            <person name="Hotuta T."/>
            <person name="Kusano J."/>
            <person name="Kanehori K."/>
            <person name="Takahashi-Fujii A."/>
            <person name="Hara H."/>
            <person name="Tanase T.-O."/>
            <person name="Nomura Y."/>
            <person name="Togiya S."/>
            <person name="Komai F."/>
            <person name="Hara R."/>
            <person name="Takeuchi K."/>
            <person name="Arita M."/>
            <person name="Imose N."/>
            <person name="Musashino K."/>
            <person name="Yuuki H."/>
            <person name="Oshima A."/>
            <person name="Sasaki N."/>
            <person name="Aotsuka S."/>
            <person name="Yoshikawa Y."/>
            <person name="Matsunawa H."/>
            <person name="Ichihara T."/>
            <person name="Shiohata N."/>
            <person name="Sano S."/>
            <person name="Moriya S."/>
            <person name="Momiyama H."/>
            <person name="Satoh N."/>
            <person name="Takami S."/>
            <person name="Terashima Y."/>
            <person name="Suzuki O."/>
            <person name="Nakagawa S."/>
            <person name="Senoh A."/>
            <person name="Mizoguchi H."/>
            <person name="Goto Y."/>
            <person name="Shimizu F."/>
            <person name="Wakebe H."/>
            <person name="Hishigaki H."/>
            <person name="Watanabe T."/>
            <person name="Sugiyama A."/>
            <person name="Takemoto M."/>
            <person name="Kawakami B."/>
            <person name="Yamazaki M."/>
            <person name="Watanabe K."/>
            <person name="Kumagai A."/>
            <person name="Itakura S."/>
            <person name="Fukuzumi Y."/>
            <person name="Fujimori Y."/>
            <person name="Komiyama M."/>
            <person name="Tashiro H."/>
            <person name="Tanigami A."/>
            <person name="Fujiwara T."/>
            <person name="Ono T."/>
            <person name="Yamada K."/>
            <person name="Fujii Y."/>
            <person name="Ozaki K."/>
            <person name="Hirao M."/>
            <person name="Ohmori Y."/>
            <person name="Kawabata A."/>
            <person name="Hikiji T."/>
            <person name="Kobatake N."/>
            <person name="Inagaki H."/>
            <person name="Ikema Y."/>
            <person name="Okamoto S."/>
            <person name="Okitani R."/>
            <person name="Kawakami T."/>
            <person name="Noguchi S."/>
            <person name="Itoh T."/>
            <person name="Shigeta K."/>
            <person name="Senba T."/>
            <person name="Matsumura K."/>
            <person name="Nakajima Y."/>
            <person name="Mizuno T."/>
            <person name="Morinaga M."/>
            <person name="Sasaki M."/>
            <person name="Togashi T."/>
            <person name="Oyama M."/>
            <person name="Hata H."/>
            <person name="Watanabe M."/>
            <person name="Komatsu T."/>
            <person name="Mizushima-Sugano J."/>
            <person name="Satoh T."/>
            <person name="Shirai Y."/>
            <person name="Takahashi Y."/>
            <person name="Nakagawa K."/>
            <person name="Okumura K."/>
            <person name="Nagase T."/>
            <person name="Nomura N."/>
            <person name="Kikuchi H."/>
            <person name="Masuho Y."/>
            <person name="Yamashita R."/>
            <person name="Nakai K."/>
            <person name="Yada T."/>
            <person name="Nakamura Y."/>
            <person name="Ohara O."/>
            <person name="Isogai T."/>
            <person name="Sugano S."/>
        </authorList>
    </citation>
    <scope>NUCLEOTIDE SEQUENCE [LARGE SCALE MRNA] (ISOFORM 2)</scope>
    <scope>NUCLEOTIDE SEQUENCE [LARGE SCALE MRNA] OF 2357-3371 (ISOFORM 1)</scope>
    <source>
        <tissue>Colon</tissue>
    </source>
</reference>
<reference key="2">
    <citation type="journal article" date="2005" name="Nature">
        <title>Generation and annotation of the DNA sequences of human chromosomes 2 and 4.</title>
        <authorList>
            <person name="Hillier L.W."/>
            <person name="Graves T.A."/>
            <person name="Fulton R.S."/>
            <person name="Fulton L.A."/>
            <person name="Pepin K.H."/>
            <person name="Minx P."/>
            <person name="Wagner-McPherson C."/>
            <person name="Layman D."/>
            <person name="Wylie K."/>
            <person name="Sekhon M."/>
            <person name="Becker M.C."/>
            <person name="Fewell G.A."/>
            <person name="Delehaunty K.D."/>
            <person name="Miner T.L."/>
            <person name="Nash W.E."/>
            <person name="Kremitzki C."/>
            <person name="Oddy L."/>
            <person name="Du H."/>
            <person name="Sun H."/>
            <person name="Bradshaw-Cordum H."/>
            <person name="Ali J."/>
            <person name="Carter J."/>
            <person name="Cordes M."/>
            <person name="Harris A."/>
            <person name="Isak A."/>
            <person name="van Brunt A."/>
            <person name="Nguyen C."/>
            <person name="Du F."/>
            <person name="Courtney L."/>
            <person name="Kalicki J."/>
            <person name="Ozersky P."/>
            <person name="Abbott S."/>
            <person name="Armstrong J."/>
            <person name="Belter E.A."/>
            <person name="Caruso L."/>
            <person name="Cedroni M."/>
            <person name="Cotton M."/>
            <person name="Davidson T."/>
            <person name="Desai A."/>
            <person name="Elliott G."/>
            <person name="Erb T."/>
            <person name="Fronick C."/>
            <person name="Gaige T."/>
            <person name="Haakenson W."/>
            <person name="Haglund K."/>
            <person name="Holmes A."/>
            <person name="Harkins R."/>
            <person name="Kim K."/>
            <person name="Kruchowski S.S."/>
            <person name="Strong C.M."/>
            <person name="Grewal N."/>
            <person name="Goyea E."/>
            <person name="Hou S."/>
            <person name="Levy A."/>
            <person name="Martinka S."/>
            <person name="Mead K."/>
            <person name="McLellan M.D."/>
            <person name="Meyer R."/>
            <person name="Randall-Maher J."/>
            <person name="Tomlinson C."/>
            <person name="Dauphin-Kohlberg S."/>
            <person name="Kozlowicz-Reilly A."/>
            <person name="Shah N."/>
            <person name="Swearengen-Shahid S."/>
            <person name="Snider J."/>
            <person name="Strong J.T."/>
            <person name="Thompson J."/>
            <person name="Yoakum M."/>
            <person name="Leonard S."/>
            <person name="Pearman C."/>
            <person name="Trani L."/>
            <person name="Radionenko M."/>
            <person name="Waligorski J.E."/>
            <person name="Wang C."/>
            <person name="Rock S.M."/>
            <person name="Tin-Wollam A.-M."/>
            <person name="Maupin R."/>
            <person name="Latreille P."/>
            <person name="Wendl M.C."/>
            <person name="Yang S.-P."/>
            <person name="Pohl C."/>
            <person name="Wallis J.W."/>
            <person name="Spieth J."/>
            <person name="Bieri T.A."/>
            <person name="Berkowicz N."/>
            <person name="Nelson J.O."/>
            <person name="Osborne J."/>
            <person name="Ding L."/>
            <person name="Meyer R."/>
            <person name="Sabo A."/>
            <person name="Shotland Y."/>
            <person name="Sinha P."/>
            <person name="Wohldmann P.E."/>
            <person name="Cook L.L."/>
            <person name="Hickenbotham M.T."/>
            <person name="Eldred J."/>
            <person name="Williams D."/>
            <person name="Jones T.A."/>
            <person name="She X."/>
            <person name="Ciccarelli F.D."/>
            <person name="Izaurralde E."/>
            <person name="Taylor J."/>
            <person name="Schmutz J."/>
            <person name="Myers R.M."/>
            <person name="Cox D.R."/>
            <person name="Huang X."/>
            <person name="McPherson J.D."/>
            <person name="Mardis E.R."/>
            <person name="Clifton S.W."/>
            <person name="Warren W.C."/>
            <person name="Chinwalla A.T."/>
            <person name="Eddy S.R."/>
            <person name="Marra M.A."/>
            <person name="Ovcharenko I."/>
            <person name="Furey T.S."/>
            <person name="Miller W."/>
            <person name="Eichler E.E."/>
            <person name="Bork P."/>
            <person name="Suyama M."/>
            <person name="Torrents D."/>
            <person name="Waterston R.H."/>
            <person name="Wilson R.K."/>
        </authorList>
    </citation>
    <scope>NUCLEOTIDE SEQUENCE [LARGE SCALE GENOMIC DNA]</scope>
</reference>
<reference key="3">
    <citation type="journal article" date="2004" name="Genome Res.">
        <title>The status, quality, and expansion of the NIH full-length cDNA project: the Mammalian Gene Collection (MGC).</title>
        <authorList>
            <consortium name="The MGC Project Team"/>
        </authorList>
    </citation>
    <scope>NUCLEOTIDE SEQUENCE [LARGE SCALE MRNA] (ISOFORM 2)</scope>
    <source>
        <tissue>Brain</tissue>
    </source>
</reference>
<reference key="4">
    <citation type="journal article" date="2004" name="J. Mol. Biol.">
        <title>Identification of new human cadherin genes using a combination of protein motif search and gene finding methods.</title>
        <authorList>
            <person name="Hoeng J.C."/>
            <person name="Ivanov N.V."/>
            <person name="Hodor P."/>
            <person name="Xia M."/>
            <person name="Wei N."/>
            <person name="Blevins R."/>
            <person name="Gerhold D."/>
            <person name="Borodovsky M."/>
            <person name="Liu Y."/>
        </authorList>
    </citation>
    <scope>NUCLEOTIDE SEQUENCE [MRNA] OF 1244-3371 (ISOFORM 1)</scope>
    <scope>TISSUE SPECIFICITY</scope>
</reference>
<accession>Q6V1P9</accession>
<accession>A0A096LNH0</accession>
<accession>B2RU14</accession>
<accession>E9PC11</accession>
<accession>Q4W5P9</accession>
<accession>Q6ZS61</accession>
<accession>Q9NXU8</accession>
<dbReference type="EMBL" id="AK000054">
    <property type="protein sequence ID" value="BAA90911.1"/>
    <property type="status" value="ALT_INIT"/>
    <property type="molecule type" value="mRNA"/>
</dbReference>
<dbReference type="EMBL" id="AK127704">
    <property type="protein sequence ID" value="BAC87093.1"/>
    <property type="status" value="ALT_FRAME"/>
    <property type="molecule type" value="mRNA"/>
</dbReference>
<dbReference type="EMBL" id="AC079298">
    <property type="protein sequence ID" value="AAY41019.1"/>
    <property type="status" value="ALT_SEQ"/>
    <property type="molecule type" value="Genomic_DNA"/>
</dbReference>
<dbReference type="EMBL" id="AC110608">
    <property type="status" value="NOT_ANNOTATED_CDS"/>
    <property type="molecule type" value="Genomic_DNA"/>
</dbReference>
<dbReference type="EMBL" id="AC110775">
    <property type="status" value="NOT_ANNOTATED_CDS"/>
    <property type="molecule type" value="Genomic_DNA"/>
</dbReference>
<dbReference type="EMBL" id="BC140919">
    <property type="protein sequence ID" value="AAI40920.1"/>
    <property type="molecule type" value="mRNA"/>
</dbReference>
<dbReference type="EMBL" id="AY354497">
    <property type="protein sequence ID" value="AAR10443.1"/>
    <property type="status" value="ALT_SEQ"/>
    <property type="molecule type" value="mRNA"/>
</dbReference>
<dbReference type="CCDS" id="CCDS47150.1">
    <molecule id="Q6V1P9-5"/>
</dbReference>
<dbReference type="CCDS" id="CCDS87275.1">
    <molecule id="Q6V1P9-1"/>
</dbReference>
<dbReference type="RefSeq" id="NP_001136024.1">
    <molecule id="Q6V1P9-5"/>
    <property type="nucleotide sequence ID" value="NM_001142552.2"/>
</dbReference>
<dbReference type="RefSeq" id="NP_001345164.1">
    <molecule id="Q6V1P9-1"/>
    <property type="nucleotide sequence ID" value="NM_001358235.2"/>
</dbReference>
<dbReference type="RefSeq" id="NP_060109.2">
    <property type="nucleotide sequence ID" value="NM_017639.3"/>
</dbReference>
<dbReference type="RefSeq" id="XP_011530347.1">
    <property type="nucleotide sequence ID" value="XM_011532045.1"/>
</dbReference>
<dbReference type="SMR" id="Q6V1P9"/>
<dbReference type="BioGRID" id="120157">
    <property type="interactions" value="3"/>
</dbReference>
<dbReference type="FunCoup" id="Q6V1P9">
    <property type="interactions" value="35"/>
</dbReference>
<dbReference type="IntAct" id="Q6V1P9">
    <property type="interactions" value="4"/>
</dbReference>
<dbReference type="MINT" id="Q6V1P9"/>
<dbReference type="STRING" id="9606.ENSP00000349768"/>
<dbReference type="GlyCosmos" id="Q6V1P9">
    <property type="glycosylation" value="23 sites, No reported glycans"/>
</dbReference>
<dbReference type="GlyGen" id="Q6V1P9">
    <property type="glycosylation" value="23 sites"/>
</dbReference>
<dbReference type="iPTMnet" id="Q6V1P9"/>
<dbReference type="PhosphoSitePlus" id="Q6V1P9"/>
<dbReference type="BioMuta" id="DCHS2"/>
<dbReference type="DMDM" id="74762378"/>
<dbReference type="jPOST" id="Q6V1P9"/>
<dbReference type="MassIVE" id="Q6V1P9"/>
<dbReference type="PaxDb" id="9606-ENSP00000485514"/>
<dbReference type="PeptideAtlas" id="Q6V1P9"/>
<dbReference type="ProteomicsDB" id="19339"/>
<dbReference type="ProteomicsDB" id="67706">
    <molecule id="Q6V1P9-1"/>
</dbReference>
<dbReference type="Antibodypedia" id="74247">
    <property type="antibodies" value="5 antibodies from 5 providers"/>
</dbReference>
<dbReference type="DNASU" id="54798"/>
<dbReference type="Ensembl" id="ENST00000339452.2">
    <molecule id="Q6V1P9-5"/>
    <property type="protein sequence ID" value="ENSP00000345062.1"/>
    <property type="gene ID" value="ENSG00000197410.14"/>
</dbReference>
<dbReference type="Ensembl" id="ENST00000357232.10">
    <molecule id="Q6V1P9-1"/>
    <property type="protein sequence ID" value="ENSP00000349768.5"/>
    <property type="gene ID" value="ENSG00000197410.14"/>
</dbReference>
<dbReference type="Ensembl" id="ENST00000639062.3">
    <molecule id="Q6V1P9-1"/>
    <property type="protein sequence ID" value="ENSP00000491252.2"/>
    <property type="gene ID" value="ENSG00000284227.3"/>
</dbReference>
<dbReference type="Ensembl" id="ENST00000639512.1">
    <molecule id="Q6V1P9-5"/>
    <property type="protein sequence ID" value="ENSP00000492852.1"/>
    <property type="gene ID" value="ENSG00000284227.3"/>
</dbReference>
<dbReference type="GeneID" id="54798"/>
<dbReference type="KEGG" id="hsa:54798"/>
<dbReference type="MANE-Select" id="ENST00000357232.10">
    <property type="protein sequence ID" value="ENSP00000349768.5"/>
    <property type="RefSeq nucleotide sequence ID" value="NM_001358235.2"/>
    <property type="RefSeq protein sequence ID" value="NP_001345164.1"/>
</dbReference>
<dbReference type="UCSC" id="uc003inw.2">
    <molecule id="Q6V1P9-1"/>
    <property type="organism name" value="human"/>
</dbReference>
<dbReference type="UCSC" id="uc063aiu.1">
    <property type="organism name" value="human"/>
</dbReference>
<dbReference type="AGR" id="HGNC:23111"/>
<dbReference type="CTD" id="54798"/>
<dbReference type="DisGeNET" id="54798"/>
<dbReference type="GeneCards" id="DCHS2"/>
<dbReference type="HGNC" id="HGNC:23111">
    <property type="gene designation" value="DCHS2"/>
</dbReference>
<dbReference type="HPA" id="ENSG00000197410">
    <property type="expression patterns" value="Tissue enhanced (brain, intestine)"/>
</dbReference>
<dbReference type="MIM" id="612486">
    <property type="type" value="gene"/>
</dbReference>
<dbReference type="neXtProt" id="NX_Q6V1P9"/>
<dbReference type="OpenTargets" id="ENSG00000197410"/>
<dbReference type="PharmGKB" id="PA134953793"/>
<dbReference type="VEuPathDB" id="HostDB:ENSG00000197410"/>
<dbReference type="eggNOG" id="KOG1219">
    <property type="taxonomic scope" value="Eukaryota"/>
</dbReference>
<dbReference type="eggNOG" id="KOG3594">
    <property type="taxonomic scope" value="Eukaryota"/>
</dbReference>
<dbReference type="GeneTree" id="ENSGT00940000162999"/>
<dbReference type="HOGENOM" id="CLU_000265_1_1_1"/>
<dbReference type="InParanoid" id="Q6V1P9"/>
<dbReference type="OMA" id="YRPSYRM"/>
<dbReference type="OrthoDB" id="6252479at2759"/>
<dbReference type="PAN-GO" id="Q6V1P9">
    <property type="GO annotations" value="0 GO annotations based on evolutionary models"/>
</dbReference>
<dbReference type="PhylomeDB" id="Q6V1P9"/>
<dbReference type="TreeFam" id="TF330641"/>
<dbReference type="PathwayCommons" id="Q6V1P9"/>
<dbReference type="SignaLink" id="Q6V1P9"/>
<dbReference type="BioGRID-ORCS" id="54798">
    <property type="hits" value="8 hits in 1156 CRISPR screens"/>
</dbReference>
<dbReference type="ChiTaRS" id="DCHS2">
    <property type="organism name" value="human"/>
</dbReference>
<dbReference type="GeneWiki" id="DCHS2"/>
<dbReference type="GenomeRNAi" id="54798"/>
<dbReference type="Pharos" id="Q6V1P9">
    <property type="development level" value="Tdark"/>
</dbReference>
<dbReference type="PRO" id="PR:Q6V1P9"/>
<dbReference type="Proteomes" id="UP000005640">
    <property type="component" value="Chromosome 4"/>
</dbReference>
<dbReference type="RNAct" id="Q6V1P9">
    <property type="molecule type" value="protein"/>
</dbReference>
<dbReference type="Bgee" id="ENSG00000197410">
    <property type="expression patterns" value="Expressed in prefrontal cortex and 95 other cell types or tissues"/>
</dbReference>
<dbReference type="ExpressionAtlas" id="Q6V1P9">
    <property type="expression patterns" value="baseline and differential"/>
</dbReference>
<dbReference type="GO" id="GO:0005886">
    <property type="term" value="C:plasma membrane"/>
    <property type="evidence" value="ECO:0007669"/>
    <property type="project" value="InterPro"/>
</dbReference>
<dbReference type="GO" id="GO:0005509">
    <property type="term" value="F:calcium ion binding"/>
    <property type="evidence" value="ECO:0007669"/>
    <property type="project" value="InterPro"/>
</dbReference>
<dbReference type="GO" id="GO:0072137">
    <property type="term" value="P:condensed mesenchymal cell proliferation"/>
    <property type="evidence" value="ECO:0007669"/>
    <property type="project" value="Ensembl"/>
</dbReference>
<dbReference type="GO" id="GO:0007156">
    <property type="term" value="P:homophilic cell adhesion via plasma membrane adhesion molecules"/>
    <property type="evidence" value="ECO:0007669"/>
    <property type="project" value="InterPro"/>
</dbReference>
<dbReference type="GO" id="GO:0072006">
    <property type="term" value="P:nephron development"/>
    <property type="evidence" value="ECO:0007669"/>
    <property type="project" value="Ensembl"/>
</dbReference>
<dbReference type="CDD" id="cd11304">
    <property type="entry name" value="Cadherin_repeat"/>
    <property type="match status" value="26"/>
</dbReference>
<dbReference type="FunFam" id="2.60.40.60:FF:000140">
    <property type="entry name" value="Dachsous cadherin-related 1"/>
    <property type="match status" value="1"/>
</dbReference>
<dbReference type="FunFam" id="2.60.40.60:FF:000150">
    <property type="entry name" value="Dachsous cadherin-related 1"/>
    <property type="match status" value="1"/>
</dbReference>
<dbReference type="FunFam" id="2.60.40.60:FF:000201">
    <property type="entry name" value="Dachsous cadherin-related 1"/>
    <property type="match status" value="1"/>
</dbReference>
<dbReference type="FunFam" id="2.60.40.60:FF:000020">
    <property type="entry name" value="Dachsous cadherin-related 1b"/>
    <property type="match status" value="1"/>
</dbReference>
<dbReference type="FunFam" id="2.60.40.60:FF:000116">
    <property type="entry name" value="Dachsous cadherin-related 2"/>
    <property type="match status" value="1"/>
</dbReference>
<dbReference type="FunFam" id="2.60.40.60:FF:000153">
    <property type="entry name" value="Dachsous cadherin-related 2"/>
    <property type="match status" value="1"/>
</dbReference>
<dbReference type="FunFam" id="2.60.40.60:FF:000211">
    <property type="entry name" value="Dachsous cadherin-related 2"/>
    <property type="match status" value="1"/>
</dbReference>
<dbReference type="FunFam" id="2.60.40.60:FF:000227">
    <property type="entry name" value="Dachsous cadherin-related 2"/>
    <property type="match status" value="1"/>
</dbReference>
<dbReference type="FunFam" id="2.60.40.60:FF:000267">
    <property type="entry name" value="Dachsous cadherin-related 2"/>
    <property type="match status" value="1"/>
</dbReference>
<dbReference type="FunFam" id="2.60.40.60:FF:000269">
    <property type="entry name" value="Dachsous cadherin-related 2"/>
    <property type="match status" value="1"/>
</dbReference>
<dbReference type="FunFam" id="2.60.40.60:FF:000304">
    <property type="entry name" value="Dachsous cadherin-related 2"/>
    <property type="match status" value="1"/>
</dbReference>
<dbReference type="FunFam" id="2.60.40.60:FF:000318">
    <property type="entry name" value="Dachsous cadherin-related 2"/>
    <property type="match status" value="1"/>
</dbReference>
<dbReference type="FunFam" id="2.60.40.60:FF:000226">
    <property type="entry name" value="Dachsous, isoform B"/>
    <property type="match status" value="1"/>
</dbReference>
<dbReference type="FunFam" id="2.60.40.60:FF:000236">
    <property type="entry name" value="Dachsous, isoform B"/>
    <property type="match status" value="1"/>
</dbReference>
<dbReference type="FunFam" id="2.60.40.60:FF:000080">
    <property type="entry name" value="FAT atypical cadherin 1"/>
    <property type="match status" value="1"/>
</dbReference>
<dbReference type="FunFam" id="2.60.40.60:FF:000101">
    <property type="entry name" value="FAT atypical cadherin 4"/>
    <property type="match status" value="1"/>
</dbReference>
<dbReference type="FunFam" id="2.60.40.60:FF:000263">
    <property type="entry name" value="LOW QUALITY PROTEIN: protocadherin-23"/>
    <property type="match status" value="1"/>
</dbReference>
<dbReference type="FunFam" id="2.60.40.60:FF:000278">
    <property type="entry name" value="LOW QUALITY PROTEIN: protocadherin-23"/>
    <property type="match status" value="2"/>
</dbReference>
<dbReference type="FunFam" id="2.60.40.60:FF:000359">
    <property type="entry name" value="LOW QUALITY PROTEIN: protocadherin-23"/>
    <property type="match status" value="1"/>
</dbReference>
<dbReference type="FunFam" id="2.60.40.60:FF:000181">
    <property type="entry name" value="Predicted protein"/>
    <property type="match status" value="2"/>
</dbReference>
<dbReference type="FunFam" id="2.60.40.60:FF:000035">
    <property type="entry name" value="Protocadherin Fat 3"/>
    <property type="match status" value="2"/>
</dbReference>
<dbReference type="FunFam" id="2.60.40.60:FF:000081">
    <property type="entry name" value="protocadherin Fat 4"/>
    <property type="match status" value="1"/>
</dbReference>
<dbReference type="FunFam" id="2.60.40.60:FF:000385">
    <property type="entry name" value="Protocadherin-23"/>
    <property type="match status" value="1"/>
</dbReference>
<dbReference type="FunFam" id="2.60.40.60:FF:000255">
    <property type="entry name" value="protocadherin-23 isoform X2"/>
    <property type="match status" value="1"/>
</dbReference>
<dbReference type="Gene3D" id="2.60.40.60">
    <property type="entry name" value="Cadherins"/>
    <property type="match status" value="27"/>
</dbReference>
<dbReference type="InterPro" id="IPR002126">
    <property type="entry name" value="Cadherin-like_dom"/>
</dbReference>
<dbReference type="InterPro" id="IPR015919">
    <property type="entry name" value="Cadherin-like_sf"/>
</dbReference>
<dbReference type="InterPro" id="IPR020894">
    <property type="entry name" value="Cadherin_CS"/>
</dbReference>
<dbReference type="PANTHER" id="PTHR24026:SF121">
    <property type="entry name" value="CADHERIN RELATED FAMILY MEMBER 1"/>
    <property type="match status" value="1"/>
</dbReference>
<dbReference type="PANTHER" id="PTHR24026">
    <property type="entry name" value="FAT ATYPICAL CADHERIN-RELATED"/>
    <property type="match status" value="1"/>
</dbReference>
<dbReference type="Pfam" id="PF00028">
    <property type="entry name" value="Cadherin"/>
    <property type="match status" value="24"/>
</dbReference>
<dbReference type="PRINTS" id="PR00205">
    <property type="entry name" value="CADHERIN"/>
</dbReference>
<dbReference type="SMART" id="SM00112">
    <property type="entry name" value="CA"/>
    <property type="match status" value="27"/>
</dbReference>
<dbReference type="SUPFAM" id="SSF49313">
    <property type="entry name" value="Cadherin-like"/>
    <property type="match status" value="27"/>
</dbReference>
<dbReference type="PROSITE" id="PS00232">
    <property type="entry name" value="CADHERIN_1"/>
    <property type="match status" value="17"/>
</dbReference>
<dbReference type="PROSITE" id="PS50268">
    <property type="entry name" value="CADHERIN_2"/>
    <property type="match status" value="27"/>
</dbReference>
<keyword id="KW-0025">Alternative splicing</keyword>
<keyword id="KW-0106">Calcium</keyword>
<keyword id="KW-0130">Cell adhesion</keyword>
<keyword id="KW-0325">Glycoprotein</keyword>
<keyword id="KW-0472">Membrane</keyword>
<keyword id="KW-1267">Proteomics identification</keyword>
<keyword id="KW-1185">Reference proteome</keyword>
<keyword id="KW-0677">Repeat</keyword>
<keyword id="KW-0812">Transmembrane</keyword>
<keyword id="KW-1133">Transmembrane helix</keyword>
<protein>
    <recommendedName>
        <fullName>Protocadherin-23</fullName>
    </recommendedName>
    <alternativeName>
        <fullName>Cadherin-27</fullName>
    </alternativeName>
    <alternativeName>
        <fullName>Cadherin-like protein CDHJ</fullName>
    </alternativeName>
    <alternativeName>
        <fullName>Cadherin-like protein VR8</fullName>
    </alternativeName>
    <alternativeName>
        <fullName>Protein dachsous homolog 2</fullName>
    </alternativeName>
    <alternativeName>
        <fullName>Protocadherin PCDHJ</fullName>
    </alternativeName>
</protein>
<evidence type="ECO:0000250" key="1"/>
<evidence type="ECO:0000255" key="2"/>
<evidence type="ECO:0000255" key="3">
    <source>
        <dbReference type="PROSITE-ProRule" id="PRU00043"/>
    </source>
</evidence>
<evidence type="ECO:0000256" key="4">
    <source>
        <dbReference type="SAM" id="MobiDB-lite"/>
    </source>
</evidence>
<evidence type="ECO:0000269" key="5">
    <source>
    </source>
</evidence>
<evidence type="ECO:0000303" key="6">
    <source>
    </source>
</evidence>
<evidence type="ECO:0000303" key="7">
    <source>
    </source>
</evidence>
<evidence type="ECO:0000305" key="8"/>
<sequence>MSPCGRKMGEGRQQRRAPVGKLLLLPGRRDTPHGRSGSSGARTQRSLLWLLVHVWLWAASGSSAQLFNLTLSVDEGLPPDTLVGDIRAGLPAAQQQEGSGFFLSEDSDDSPLLDDFHVHPDTGIIRTARRLDRERRDHYSFVAATLLGAVVQVEIRVNDVNDHSPRFPLDSLQLDVSELSPPGTAFRLPVAHDPDAGLFSTQGYTLVQPSDLPKDPAGPFFQLRYRTPGPLPSPLLPGSSSPLEPLDLVLLRRLDREEAAAHRLQIEAWDGGRPRRTGLLSVELRVLDENDNPPVFEQDEYRAAVREDAQPGAEVCRVRATDRDLGPNGFVRYSVRARQVPGAGSGGGALGDAAYFAVEELSGVVRVWRPLDREAQAWHQLVVEARDGGAEPEVATVRVSIAVLDVNDNRPAIHVLFLTEGGVARVSEGARPGDYVARVSVSDADGDWEKEDEATGELGVGLGDGSISLSLEGGEGDFALLPGGPPGVFFLCVEGPLDRESRDLYELLLVATDAGSPPLSTEETLLLRVADLNDQPPLFSQQHYKASVSEAAAPGTVVMWVSASDADEAGSDHAWLRYTVVQLSAPCNLGSLQSKMVHTAECGPSFAIDSESGAISTIRTLDREVQEAVELKVVAQDLGEPPLSATCLVSITVDDVNDNEPIFWRQVYNATIAEHAPVGHCFLQVTASDADSGLYGFIEYSLYDGFLSYEAPQAFRIDPHDGQICVSQDIDRERDPATYDLLVEAKDGGGLSAQAFVRVDLEDVNDNHPVFNPSTYVTSISDETQPGTEIINVLATDQDSGIYGTVAYELIPGNVSSLFTIDSTTGIIYLTLPLSHLESTTLSLMVSAQDGGGLTAVINADVTIHIFQTTLAPAEFERPKYTFLVYEDVPEDSPIGTVKAREPLNSSEPIFYRISSGDLGGKFSIHPRLGTIRTRKPLDHETQPVVVLTVQAQLGSAPACSSTEVNITVMDVNDNHPAFLRTSDEIRISQTTPPGTALYLARAEDRDSGRNGLIRYSIASPQPGVFAIDRALGVLFLNGSLGAGEQRELTLTLRAEDQGVHPQAALLVLTVVIEKREHSPSWTFEHLVYQVEVSESLSPMTQMLQTQAHPLGPQRAASPLRYSLEPSVDSAMFGIRPYTGWIYLRRQFDYESTQTYNFRVFAWIPEDGFLQNVSTTVIVRVWDENDNSPTFLHDVLFLKVEESPVPQGVIGKITAIDMDSGKNGQLLYFLLSDGKFFKMNPNTGELINWVALDREHRGHHEMTVLVTDRGSPPRNATMAVYVSVTDINDNRPFFPQCLPGKELHVKVLEGQPVNMLVTTVFAKDPDEGNNAEVTYSVSSEDSSDHFKIDANNGEIRTTTILSYDYRPSYRMSVIATDQGVPPLQGQAVVNIQVIPLSKGRAIMSQNIRHLIIPENLKPTKIMSLIKSSDHLQQHYNGKLHFSIVADDKDGHFEIDSSTGDLFLSKELDYETTSHYLFRVITTDHSKNLSLSSTVFLSIDVEDQNDHSPSFQDELIVISVEENVPIGTLVYVFNAKDDDGSFLNSRIQYYIESHNPGTNPFLIHPSFGTLVTVSRLDRESIPTVILTVTASDQAVNVTDRRLRSLTAQIVILDVNDHNPTFISFPNAHVKEDVTVGSLVHHITAHDPDEGRNGKVTYSILSGNENMTFMLDESSGLLTTTCPLDYEMKTQHILTVLALDDGTPALSSSQTLTVTVLDVNDEAPVFKQHLYEASVKENQNPGEFVTRVEALDRDSGVNSKLQFEIMPGASFELFEINSDTGEVVTTTILDREIQEVFTLRVLVRDGGFPSLSSTTTILCTVEDENDHAPEFIVSSYDIEVLENQEPEVVYTVLASDMDAGNNRAVEYHIIDGNTDECFTINEMSGELSTTRALDREQISNFTLVILCSDLGDPPRSSVIHLQVRVLDANDHSPSFPTLYYQSSVREDAEVGTVVLVLSAVDKDEGLNGQTEYFLTDEASGAFTIDPMSGTLKTSNTLDREARSQHTFSAVARDCSIQGSRSTTVIIKVYVTDVNDNDPVLEQNPFDVFLSPESPTNQTTVIVRADDLDLGPNGTVVFSFAETQSMFSIDKYTGEIQFQQNPSSEYFPIWLQLKVTDQGIPARTTTGLLVIHMEGEDVKISFSHHLYKGLVTENCEAGTSIVTVKAFAPDSIQDSMKYSIFSGNEDGVLSLCSKSGQLTVKEPKFLDFEVRNEVQLIVLAESSGHRAYCKVAVLIQDENDNSPCFEQSIYQASVSESQLYNAHVIQVFATDLDSGLNGLIEYSILSGNQEEAFQIDALSGVITTKAILDYELTSSYSLIVQATDKGMPRLSNTTVIKVQVTDINDNAPAFLPSEAVEITEDSLPGVIVTHVSVHDVDLNSAFIFSFAKESNPGTKFAIDQNTGVVVLVKTLDFEEMTEYELLIQISDSVHYTEGALVVRVLDVNDNPPVFSQDFYQVTVPESIPVGYSVLTLSATDLESNENISYRILSSSKEFSIDPKNGTIFTISPVLLLDTISTTQFLVEASDGGNPDLRALTLVEIGIEDMNNYAPEFTVKSYNLSLSEDALVGSTLVTFSNIDHDWTRENTYVEYSIISGNSQNNFHVETKFFHSEYPYKQVGYLVLLHSLDREASASHELVILASDSGCPPLSSTAVISIQVLDVNDNPPNFSSLSYHTHVKESTPLGSHITVVSANDRDTGSHAEIIYNIISGNEKGHFYLEENTGVLYLIKPLDYEKMTKFTLTVQASDAEKKHFSFAVVFVSVLDDNDHAPQFMFSSFSCIVPENLPISSTICSINALDFDAGPYGELTYSIVSPCFLTHGMSYDHDLFLIDPLTGDIHAKQILDYENGNKYCLTVQAKDKGDATASLVVWVDIEGIDEFEPIFTQDQYFFTLPEKNKDRQLIGRVEASDADAGIDGVILYSLGTSSPFFSVNKTNGNIYLIRALPLIKSQLNKEDTLEMKIIAHSPKSDSKFASCTVFVNVSFSSEGTPLAVFASSFSISLVVSFLVFLILICILIVMILRHKQKDTINNYEEKKTSSLDADLRVTRDASVLKAFQKTDDCSNEVVPVDATPEWLSLISIMEKDIVNLYRHSNSSGHCSVEGETAEDKEIQRINEHPYRKCSDSALSDHESRVPDSGIPRDSDQLSCLSGETDVMVTAETAEASQTFGEGDQGEGCSTTCAQNNVLPQTVQKREAKESILADVRKESVFISGDQEVRCAALSTQTTSDHDGKDNYHWNYLLSWEPKFQPLASVFNDIAKLKDEHLHMPGIPKEKKSFVFPPPLITAVAQPGIKAVPPRMPAVNLGQVPPKHPRSPIPYHLGSLPEGMTPNFSPSLSLLTMQPPALSPLLREGELLGTHISGTCHELKAEDEVQI</sequence>
<proteinExistence type="evidence at protein level"/>
<name>PCD23_HUMAN</name>
<comment type="function">
    <text evidence="1">Calcium-dependent cell-adhesion protein.</text>
</comment>
<comment type="subcellular location">
    <subcellularLocation>
        <location evidence="2">Membrane</location>
        <topology evidence="2">Multi-pass membrane protein</topology>
    </subcellularLocation>
</comment>
<comment type="alternative products">
    <event type="alternative splicing"/>
    <isoform>
        <id>Q6V1P9-1</id>
        <name>1</name>
        <sequence type="displayed"/>
    </isoform>
    <isoform>
        <id>Q6V1P9-5</id>
        <name>2</name>
        <sequence type="described" ref="VSP_060650 VSP_060651"/>
    </isoform>
</comment>
<comment type="tissue specificity">
    <text evidence="5">Cerebral cortex and testis.</text>
</comment>
<comment type="sequence caution" evidence="8">
    <conflict type="miscellaneous discrepancy">
        <sequence resource="EMBL-CDS" id="AAR10443"/>
    </conflict>
    <text>Probable cloning artifact.</text>
</comment>
<comment type="sequence caution" evidence="8">
    <conflict type="erroneous gene model prediction">
        <sequence resource="EMBL-CDS" id="AAY41019"/>
    </conflict>
</comment>
<comment type="sequence caution" evidence="8">
    <conflict type="erroneous initiation">
        <sequence resource="EMBL-CDS" id="BAA90911"/>
    </conflict>
    <text>Truncated N-terminus.</text>
</comment>
<comment type="sequence caution" evidence="8">
    <conflict type="frameshift">
        <sequence resource="EMBL-CDS" id="BAC87093"/>
    </conflict>
</comment>
<feature type="chain" id="PRO_0000343410" description="Protocadherin-23">
    <location>
        <begin position="1"/>
        <end position="3371"/>
    </location>
</feature>
<feature type="topological domain" description="Cytoplasmic" evidence="8">
    <location>
        <begin position="1"/>
        <end position="46"/>
    </location>
</feature>
<feature type="transmembrane region" description="Helical" evidence="2">
    <location>
        <begin position="47"/>
        <end position="67"/>
    </location>
</feature>
<feature type="topological domain" description="Extracellular" evidence="8">
    <location>
        <begin position="68"/>
        <end position="2986"/>
    </location>
</feature>
<feature type="transmembrane region" description="Helical" evidence="2">
    <location>
        <begin position="2987"/>
        <end position="3017"/>
    </location>
</feature>
<feature type="topological domain" description="Cytoplasmic" evidence="8">
    <location>
        <begin position="3018"/>
        <end position="3371"/>
    </location>
</feature>
<feature type="domain" description="Cadherin 1" evidence="3">
    <location>
        <begin position="65"/>
        <end position="167"/>
    </location>
</feature>
<feature type="domain" description="Cadherin 2" evidence="3">
    <location>
        <begin position="168"/>
        <end position="296"/>
    </location>
</feature>
<feature type="domain" description="Cadherin 3" evidence="3">
    <location>
        <begin position="297"/>
        <end position="413"/>
    </location>
</feature>
<feature type="domain" description="Cadherin 4" evidence="3">
    <location>
        <begin position="424"/>
        <end position="539"/>
    </location>
</feature>
<feature type="domain" description="Cadherin 5" evidence="3">
    <location>
        <begin position="540"/>
        <end position="663"/>
    </location>
</feature>
<feature type="domain" description="Cadherin 6" evidence="3">
    <location>
        <begin position="664"/>
        <end position="771"/>
    </location>
</feature>
<feature type="domain" description="Cadherin 7" evidence="3">
    <location>
        <begin position="772"/>
        <end position="881"/>
    </location>
</feature>
<feature type="domain" description="Cadherin 8" evidence="3">
    <location>
        <begin position="877"/>
        <end position="979"/>
    </location>
</feature>
<feature type="domain" description="Cadherin 9" evidence="3">
    <location>
        <begin position="980"/>
        <end position="1082"/>
    </location>
</feature>
<feature type="domain" description="Cadherin 10" evidence="3">
    <location>
        <begin position="1085"/>
        <end position="1191"/>
    </location>
</feature>
<feature type="domain" description="Cadherin 11" evidence="3">
    <location>
        <begin position="1192"/>
        <end position="1294"/>
    </location>
</feature>
<feature type="domain" description="Cadherin 12" evidence="3">
    <location>
        <begin position="1299"/>
        <end position="1415"/>
    </location>
</feature>
<feature type="domain" description="Cadherin 13" evidence="3">
    <location>
        <begin position="1404"/>
        <end position="1510"/>
    </location>
</feature>
<feature type="domain" description="Cadherin 14" evidence="3">
    <location>
        <begin position="1511"/>
        <end position="1620"/>
    </location>
</feature>
<feature type="domain" description="Cadherin 15" evidence="3">
    <location>
        <begin position="1620"/>
        <end position="1724"/>
    </location>
</feature>
<feature type="domain" description="Cadherin 16" evidence="3">
    <location>
        <begin position="1725"/>
        <end position="1829"/>
    </location>
</feature>
<feature type="domain" description="Cadherin 17" evidence="3">
    <location>
        <begin position="1830"/>
        <end position="1933"/>
    </location>
</feature>
<feature type="domain" description="Cadherin 18" evidence="3">
    <location>
        <begin position="1934"/>
        <end position="2038"/>
    </location>
</feature>
<feature type="domain" description="Cadherin 19" evidence="3">
    <location>
        <begin position="2039"/>
        <end position="2130"/>
    </location>
</feature>
<feature type="domain" description="Cadherin 20" evidence="3">
    <location>
        <begin position="2140"/>
        <end position="2242"/>
    </location>
</feature>
<feature type="domain" description="Cadherin 21" evidence="3">
    <location>
        <begin position="2243"/>
        <end position="2347"/>
    </location>
</feature>
<feature type="domain" description="Cadherin 22" evidence="3">
    <location>
        <begin position="2347"/>
        <end position="2447"/>
    </location>
</feature>
<feature type="domain" description="Cadherin 23" evidence="3">
    <location>
        <begin position="2448"/>
        <end position="2549"/>
    </location>
</feature>
<feature type="domain" description="Cadherin 24" evidence="3">
    <location>
        <begin position="2550"/>
        <end position="2665"/>
    </location>
</feature>
<feature type="domain" description="Cadherin 25" evidence="3">
    <location>
        <begin position="2666"/>
        <end position="2769"/>
    </location>
</feature>
<feature type="domain" description="Cadherin 26" evidence="3">
    <location>
        <begin position="2770"/>
        <end position="2880"/>
    </location>
</feature>
<feature type="domain" description="Cadherin 27" evidence="3">
    <location>
        <begin position="2881"/>
        <end position="2988"/>
    </location>
</feature>
<feature type="region of interest" description="Disordered" evidence="4">
    <location>
        <begin position="1"/>
        <end position="40"/>
    </location>
</feature>
<feature type="region of interest" description="Disordered" evidence="4">
    <location>
        <begin position="3117"/>
        <end position="3141"/>
    </location>
</feature>
<feature type="compositionally biased region" description="Basic and acidic residues" evidence="4">
    <location>
        <begin position="3117"/>
        <end position="3140"/>
    </location>
</feature>
<feature type="glycosylation site" description="N-linked (GlcNAc...) asparagine" evidence="2">
    <location>
        <position position="669"/>
    </location>
</feature>
<feature type="glycosylation site" description="N-linked (GlcNAc...) asparagine" evidence="2">
    <location>
        <position position="772"/>
    </location>
</feature>
<feature type="glycosylation site" description="N-linked (GlcNAc...) asparagine" evidence="2">
    <location>
        <position position="814"/>
    </location>
</feature>
<feature type="glycosylation site" description="N-linked (GlcNAc...) asparagine" evidence="2">
    <location>
        <position position="905"/>
    </location>
</feature>
<feature type="glycosylation site" description="N-linked (GlcNAc...) asparagine" evidence="2">
    <location>
        <position position="966"/>
    </location>
</feature>
<feature type="glycosylation site" description="N-linked (GlcNAc...) asparagine" evidence="2">
    <location>
        <position position="1038"/>
    </location>
</feature>
<feature type="glycosylation site" description="N-linked (GlcNAc...) asparagine" evidence="2">
    <location>
        <position position="1172"/>
    </location>
</feature>
<feature type="glycosylation site" description="N-linked (GlcNAc...) asparagine" evidence="2">
    <location>
        <position position="1275"/>
    </location>
</feature>
<feature type="glycosylation site" description="N-linked (GlcNAc...) asparagine" evidence="2">
    <location>
        <position position="1487"/>
    </location>
</feature>
<feature type="glycosylation site" description="N-linked (GlcNAc...) asparagine" evidence="2">
    <location>
        <position position="1595"/>
    </location>
</feature>
<feature type="glycosylation site" description="N-linked (GlcNAc...) asparagine" evidence="2">
    <location>
        <position position="1617"/>
    </location>
</feature>
<feature type="glycosylation site" description="N-linked (GlcNAc...) asparagine" evidence="2">
    <location>
        <position position="1664"/>
    </location>
</feature>
<feature type="glycosylation site" description="N-linked (GlcNAc...) asparagine" evidence="2">
    <location>
        <position position="1898"/>
    </location>
</feature>
<feature type="glycosylation site" description="N-linked (GlcNAc...) asparagine" evidence="2">
    <location>
        <position position="2054"/>
    </location>
</feature>
<feature type="glycosylation site" description="N-linked (GlcNAc...) asparagine" evidence="2">
    <location>
        <position position="2070"/>
    </location>
</feature>
<feature type="glycosylation site" description="N-linked (GlcNAc...) asparagine" evidence="2">
    <location>
        <position position="2098"/>
    </location>
</feature>
<feature type="glycosylation site" description="N-linked (GlcNAc...) asparagine" evidence="2">
    <location>
        <position position="2329"/>
    </location>
</feature>
<feature type="glycosylation site" description="N-linked (GlcNAc...) asparagine" evidence="2">
    <location>
        <position position="2479"/>
    </location>
</feature>
<feature type="glycosylation site" description="N-linked (GlcNAc...) asparagine" evidence="2">
    <location>
        <position position="2497"/>
    </location>
</feature>
<feature type="glycosylation site" description="N-linked (GlcNAc...) asparagine" evidence="2">
    <location>
        <position position="2555"/>
    </location>
</feature>
<feature type="glycosylation site" description="N-linked (GlcNAc...) asparagine" evidence="2">
    <location>
        <position position="2664"/>
    </location>
</feature>
<feature type="glycosylation site" description="N-linked (GlcNAc...) asparagine" evidence="2">
    <location>
        <position position="2929"/>
    </location>
</feature>
<feature type="glycosylation site" description="N-linked (GlcNAc...) asparagine" evidence="2">
    <location>
        <position position="2977"/>
    </location>
</feature>
<feature type="splice variant" id="VSP_060650" description="In isoform 2.">
    <original>EDSSDHFKIDANNGEIRTTTILSYDYRPSY</original>
    <variation>ARPMPLKGKTAFGKQSCKKQTNKQTNKILT</variation>
    <location>
        <begin position="1340"/>
        <end position="1369"/>
    </location>
</feature>
<feature type="splice variant" id="VSP_060651" description="In isoform 2." evidence="6 7">
    <location>
        <begin position="1370"/>
        <end position="3371"/>
    </location>
</feature>
<feature type="sequence conflict" description="In Ref. 3; AAI40920." evidence="8" ref="3">
    <original>R</original>
    <variation>Q</variation>
    <location>
        <position position="15"/>
    </location>
</feature>
<feature type="sequence conflict" description="In Ref. 3; AAI40920." evidence="8" ref="3">
    <original>V</original>
    <variation>G</variation>
    <location>
        <position position="190"/>
    </location>
</feature>
<feature type="sequence conflict" description="In Ref. 3; AAI40920." evidence="8" ref="3">
    <original>G</original>
    <variation>C</variation>
    <location>
        <position position="446"/>
    </location>
</feature>
<feature type="sequence conflict" description="In Ref. 3; AAI40920." evidence="8" ref="3">
    <original>Q</original>
    <variation>E</variation>
    <location>
        <position position="593"/>
    </location>
</feature>
<feature type="sequence conflict" description="In Ref. 3; AAI40920." evidence="8" ref="3">
    <original>A</original>
    <variation>V</variation>
    <location>
        <position position="614"/>
    </location>
</feature>
<feature type="sequence conflict" description="In Ref. 3; AAI40920." evidence="8" ref="3">
    <original>T</original>
    <variation>A</variation>
    <location>
        <position position="620"/>
    </location>
</feature>
<feature type="sequence conflict" description="In Ref. 3; AAI40920." evidence="8" ref="3">
    <original>H</original>
    <variation>R</variation>
    <location>
        <position position="768"/>
    </location>
</feature>
<feature type="sequence conflict" description="In Ref. 3; AAI40920." evidence="8" ref="3">
    <original>S</original>
    <variation>L</variation>
    <location>
        <position position="843"/>
    </location>
</feature>
<feature type="sequence conflict" description="In Ref. 1; BAA90911." evidence="8" ref="1">
    <original>Q</original>
    <variation>R</variation>
    <location>
        <position position="2516"/>
    </location>
</feature>
<feature type="sequence conflict" description="In Ref. 1; BAA90911." evidence="8" ref="1">
    <original>L</original>
    <variation>P</variation>
    <location>
        <position position="2529"/>
    </location>
</feature>
<feature type="sequence conflict" description="In Ref. 1; BAA90911." evidence="8" ref="1">
    <original>K</original>
    <variation>R</variation>
    <location>
        <position position="2930"/>
    </location>
</feature>
<feature type="sequence conflict" description="In Ref. 1; BAA90911." evidence="8" ref="1">
    <original>H</original>
    <variation>Y</variation>
    <location>
        <position position="3088"/>
    </location>
</feature>
<gene>
    <name type="primary">DCHS2</name>
    <name type="synonym">CDH27</name>
    <name type="synonym">CDHJ</name>
    <name type="synonym">PCDH23</name>
    <name type="synonym">PCDHJ</name>
</gene>
<organism>
    <name type="scientific">Homo sapiens</name>
    <name type="common">Human</name>
    <dbReference type="NCBI Taxonomy" id="9606"/>
    <lineage>
        <taxon>Eukaryota</taxon>
        <taxon>Metazoa</taxon>
        <taxon>Chordata</taxon>
        <taxon>Craniata</taxon>
        <taxon>Vertebrata</taxon>
        <taxon>Euteleostomi</taxon>
        <taxon>Mammalia</taxon>
        <taxon>Eutheria</taxon>
        <taxon>Euarchontoglires</taxon>
        <taxon>Primates</taxon>
        <taxon>Haplorrhini</taxon>
        <taxon>Catarrhini</taxon>
        <taxon>Hominidae</taxon>
        <taxon>Homo</taxon>
    </lineage>
</organism>